<protein>
    <recommendedName>
        <fullName>Cytochrome b</fullName>
    </recommendedName>
    <alternativeName>
        <fullName>Complex III subunit 3</fullName>
    </alternativeName>
    <alternativeName>
        <fullName>Complex III subunit III</fullName>
    </alternativeName>
    <alternativeName>
        <fullName>Cytochrome b-c1 complex subunit 3</fullName>
    </alternativeName>
    <alternativeName>
        <fullName>Ubiquinol-cytochrome-c reductase complex cytochrome b subunit</fullName>
    </alternativeName>
</protein>
<organism>
    <name type="scientific">Sorex palustris</name>
    <name type="common">American water shrew</name>
    <dbReference type="NCBI Taxonomy" id="46219"/>
    <lineage>
        <taxon>Eukaryota</taxon>
        <taxon>Metazoa</taxon>
        <taxon>Chordata</taxon>
        <taxon>Craniata</taxon>
        <taxon>Vertebrata</taxon>
        <taxon>Euteleostomi</taxon>
        <taxon>Mammalia</taxon>
        <taxon>Eutheria</taxon>
        <taxon>Laurasiatheria</taxon>
        <taxon>Eulipotyphla</taxon>
        <taxon>Soricidae</taxon>
        <taxon>Soricinae</taxon>
        <taxon>Sorex</taxon>
    </lineage>
</organism>
<sequence length="379" mass="42728">MTNLRKTHPLMKIINNSFIDLPAPSNISSWWNFGSLLGVCLIVQILTGLFLAMHYTSDTMTAFSSVTHICRDVNYGWLIRYLHANGASMFFICLFLHVGRGLYYGSYMFLETWNIGVLLLFAVMATAFMGYVLPWGQMSFWGATVITNLLSAIPYIGSDLVEWIWGGFSVDKATLTRFFAFHFILPFIIAALAGVHLLFLHETGSNNPSGLCSDADKIPFHPYYTIKDILGILLFILILTSLVLFSPDLLGDPDNYTPANPLNTPPHIKPEWYFLFAYAILRSIPNKLGGVLALVLSILVLAFIPFLHTSKQRSMMFRPFSQCLFWILVADLLTLTWIGGQPVEHPFIIIGQLASILYFLLILVLMPITSLLENNLLKW</sequence>
<dbReference type="EMBL" id="AF238033">
    <property type="protein sequence ID" value="AAK38816.2"/>
    <property type="molecule type" value="Genomic_DNA"/>
</dbReference>
<dbReference type="EMBL" id="AJ000448">
    <property type="protein sequence ID" value="CAA04092.1"/>
    <property type="molecule type" value="Genomic_DNA"/>
</dbReference>
<dbReference type="SMR" id="O79460"/>
<dbReference type="GO" id="GO:0005743">
    <property type="term" value="C:mitochondrial inner membrane"/>
    <property type="evidence" value="ECO:0007669"/>
    <property type="project" value="UniProtKB-SubCell"/>
</dbReference>
<dbReference type="GO" id="GO:0045275">
    <property type="term" value="C:respiratory chain complex III"/>
    <property type="evidence" value="ECO:0007669"/>
    <property type="project" value="InterPro"/>
</dbReference>
<dbReference type="GO" id="GO:0046872">
    <property type="term" value="F:metal ion binding"/>
    <property type="evidence" value="ECO:0007669"/>
    <property type="project" value="UniProtKB-KW"/>
</dbReference>
<dbReference type="GO" id="GO:0008121">
    <property type="term" value="F:ubiquinol-cytochrome-c reductase activity"/>
    <property type="evidence" value="ECO:0007669"/>
    <property type="project" value="InterPro"/>
</dbReference>
<dbReference type="GO" id="GO:0006122">
    <property type="term" value="P:mitochondrial electron transport, ubiquinol to cytochrome c"/>
    <property type="evidence" value="ECO:0007669"/>
    <property type="project" value="TreeGrafter"/>
</dbReference>
<dbReference type="CDD" id="cd00290">
    <property type="entry name" value="cytochrome_b_C"/>
    <property type="match status" value="1"/>
</dbReference>
<dbReference type="CDD" id="cd00284">
    <property type="entry name" value="Cytochrome_b_N"/>
    <property type="match status" value="1"/>
</dbReference>
<dbReference type="FunFam" id="1.20.810.10:FF:000002">
    <property type="entry name" value="Cytochrome b"/>
    <property type="match status" value="1"/>
</dbReference>
<dbReference type="Gene3D" id="1.20.810.10">
    <property type="entry name" value="Cytochrome Bc1 Complex, Chain C"/>
    <property type="match status" value="1"/>
</dbReference>
<dbReference type="InterPro" id="IPR005798">
    <property type="entry name" value="Cyt_b/b6_C"/>
</dbReference>
<dbReference type="InterPro" id="IPR036150">
    <property type="entry name" value="Cyt_b/b6_C_sf"/>
</dbReference>
<dbReference type="InterPro" id="IPR005797">
    <property type="entry name" value="Cyt_b/b6_N"/>
</dbReference>
<dbReference type="InterPro" id="IPR027387">
    <property type="entry name" value="Cytb/b6-like_sf"/>
</dbReference>
<dbReference type="InterPro" id="IPR030689">
    <property type="entry name" value="Cytochrome_b"/>
</dbReference>
<dbReference type="InterPro" id="IPR048260">
    <property type="entry name" value="Cytochrome_b_C_euk/bac"/>
</dbReference>
<dbReference type="InterPro" id="IPR048259">
    <property type="entry name" value="Cytochrome_b_N_euk/bac"/>
</dbReference>
<dbReference type="InterPro" id="IPR016174">
    <property type="entry name" value="Di-haem_cyt_TM"/>
</dbReference>
<dbReference type="PANTHER" id="PTHR19271">
    <property type="entry name" value="CYTOCHROME B"/>
    <property type="match status" value="1"/>
</dbReference>
<dbReference type="PANTHER" id="PTHR19271:SF16">
    <property type="entry name" value="CYTOCHROME B"/>
    <property type="match status" value="1"/>
</dbReference>
<dbReference type="Pfam" id="PF00032">
    <property type="entry name" value="Cytochrom_B_C"/>
    <property type="match status" value="1"/>
</dbReference>
<dbReference type="Pfam" id="PF00033">
    <property type="entry name" value="Cytochrome_B"/>
    <property type="match status" value="1"/>
</dbReference>
<dbReference type="PIRSF" id="PIRSF038885">
    <property type="entry name" value="COB"/>
    <property type="match status" value="1"/>
</dbReference>
<dbReference type="SUPFAM" id="SSF81648">
    <property type="entry name" value="a domain/subunit of cytochrome bc1 complex (Ubiquinol-cytochrome c reductase)"/>
    <property type="match status" value="1"/>
</dbReference>
<dbReference type="SUPFAM" id="SSF81342">
    <property type="entry name" value="Transmembrane di-heme cytochromes"/>
    <property type="match status" value="1"/>
</dbReference>
<dbReference type="PROSITE" id="PS51003">
    <property type="entry name" value="CYTB_CTER"/>
    <property type="match status" value="1"/>
</dbReference>
<dbReference type="PROSITE" id="PS51002">
    <property type="entry name" value="CYTB_NTER"/>
    <property type="match status" value="1"/>
</dbReference>
<proteinExistence type="inferred from homology"/>
<gene>
    <name type="primary">MT-CYB</name>
    <name type="synonym">COB</name>
    <name type="synonym">CYTB</name>
    <name type="synonym">MTCYB</name>
</gene>
<comment type="function">
    <text evidence="2">Component of the ubiquinol-cytochrome c reductase complex (complex III or cytochrome b-c1 complex) that is part of the mitochondrial respiratory chain. The b-c1 complex mediates electron transfer from ubiquinol to cytochrome c. Contributes to the generation of a proton gradient across the mitochondrial membrane that is then used for ATP synthesis.</text>
</comment>
<comment type="cofactor">
    <cofactor evidence="2">
        <name>heme b</name>
        <dbReference type="ChEBI" id="CHEBI:60344"/>
    </cofactor>
    <text evidence="2">Binds 2 heme b groups non-covalently.</text>
</comment>
<comment type="subunit">
    <text evidence="2">The cytochrome bc1 complex contains 11 subunits: 3 respiratory subunits (MT-CYB, CYC1 and UQCRFS1), 2 core proteins (UQCRC1 and UQCRC2) and 6 low-molecular weight proteins (UQCRH/QCR6, UQCRB/QCR7, UQCRQ/QCR8, UQCR10/QCR9, UQCR11/QCR10 and a cleavage product of UQCRFS1). This cytochrome bc1 complex then forms a dimer.</text>
</comment>
<comment type="subcellular location">
    <subcellularLocation>
        <location evidence="2">Mitochondrion inner membrane</location>
        <topology evidence="2">Multi-pass membrane protein</topology>
    </subcellularLocation>
</comment>
<comment type="miscellaneous">
    <text evidence="1">Heme 1 (or BL or b562) is low-potential and absorbs at about 562 nm, and heme 2 (or BH or b566) is high-potential and absorbs at about 566 nm.</text>
</comment>
<comment type="similarity">
    <text evidence="3 4">Belongs to the cytochrome b family.</text>
</comment>
<comment type="caution">
    <text evidence="2">The full-length protein contains only eight transmembrane helices, not nine as predicted by bioinformatics tools.</text>
</comment>
<reference key="1">
    <citation type="journal article" date="2003" name="J. Mammal.">
        <title>Phylogenetic diversification within the Sorex cinereus group (Soricidae).</title>
        <authorList>
            <person name="Demboski J.R."/>
            <person name="Cook J.A."/>
        </authorList>
    </citation>
    <scope>NUCLEOTIDE SEQUENCE [GENOMIC DNA]</scope>
    <source>
        <strain>Isolate AFTC 2806</strain>
    </source>
</reference>
<reference key="2">
    <citation type="journal article" date="1999" name="Mol. Phylogenet. Evol.">
        <title>Molecular phylogeny and evolution of Sorex shrews (Soricidae: Insectivora) inferred from mitochondrial DNA sequence data.</title>
        <authorList>
            <person name="Fumagalli L."/>
            <person name="Taberlet P."/>
            <person name="Stewart D.T."/>
            <person name="Gielly L."/>
            <person name="Hausser J."/>
            <person name="Vogel P."/>
        </authorList>
    </citation>
    <scope>NUCLEOTIDE SEQUENCE [GENOMIC DNA] OF 44-379</scope>
</reference>
<evidence type="ECO:0000250" key="1"/>
<evidence type="ECO:0000250" key="2">
    <source>
        <dbReference type="UniProtKB" id="P00157"/>
    </source>
</evidence>
<evidence type="ECO:0000255" key="3">
    <source>
        <dbReference type="PROSITE-ProRule" id="PRU00967"/>
    </source>
</evidence>
<evidence type="ECO:0000255" key="4">
    <source>
        <dbReference type="PROSITE-ProRule" id="PRU00968"/>
    </source>
</evidence>
<evidence type="ECO:0000305" key="5"/>
<feature type="chain" id="PRO_0000061573" description="Cytochrome b">
    <location>
        <begin position="1"/>
        <end position="379"/>
    </location>
</feature>
<feature type="transmembrane region" description="Helical" evidence="2">
    <location>
        <begin position="33"/>
        <end position="53"/>
    </location>
</feature>
<feature type="transmembrane region" description="Helical" evidence="2">
    <location>
        <begin position="77"/>
        <end position="98"/>
    </location>
</feature>
<feature type="transmembrane region" description="Helical" evidence="2">
    <location>
        <begin position="113"/>
        <end position="133"/>
    </location>
</feature>
<feature type="transmembrane region" description="Helical" evidence="2">
    <location>
        <begin position="178"/>
        <end position="198"/>
    </location>
</feature>
<feature type="transmembrane region" description="Helical" evidence="2">
    <location>
        <begin position="226"/>
        <end position="246"/>
    </location>
</feature>
<feature type="transmembrane region" description="Helical" evidence="2">
    <location>
        <begin position="288"/>
        <end position="308"/>
    </location>
</feature>
<feature type="transmembrane region" description="Helical" evidence="2">
    <location>
        <begin position="320"/>
        <end position="340"/>
    </location>
</feature>
<feature type="transmembrane region" description="Helical" evidence="2">
    <location>
        <begin position="347"/>
        <end position="367"/>
    </location>
</feature>
<feature type="binding site" description="axial binding residue" evidence="2">
    <location>
        <position position="83"/>
    </location>
    <ligand>
        <name>heme b</name>
        <dbReference type="ChEBI" id="CHEBI:60344"/>
        <label>b562</label>
    </ligand>
    <ligandPart>
        <name>Fe</name>
        <dbReference type="ChEBI" id="CHEBI:18248"/>
    </ligandPart>
</feature>
<feature type="binding site" description="axial binding residue" evidence="2">
    <location>
        <position position="97"/>
    </location>
    <ligand>
        <name>heme b</name>
        <dbReference type="ChEBI" id="CHEBI:60344"/>
        <label>b566</label>
    </ligand>
    <ligandPart>
        <name>Fe</name>
        <dbReference type="ChEBI" id="CHEBI:18248"/>
    </ligandPart>
</feature>
<feature type="binding site" description="axial binding residue" evidence="2">
    <location>
        <position position="182"/>
    </location>
    <ligand>
        <name>heme b</name>
        <dbReference type="ChEBI" id="CHEBI:60344"/>
        <label>b562</label>
    </ligand>
    <ligandPart>
        <name>Fe</name>
        <dbReference type="ChEBI" id="CHEBI:18248"/>
    </ligandPart>
</feature>
<feature type="binding site" description="axial binding residue" evidence="2">
    <location>
        <position position="196"/>
    </location>
    <ligand>
        <name>heme b</name>
        <dbReference type="ChEBI" id="CHEBI:60344"/>
        <label>b566</label>
    </ligand>
    <ligandPart>
        <name>Fe</name>
        <dbReference type="ChEBI" id="CHEBI:18248"/>
    </ligandPart>
</feature>
<feature type="binding site" evidence="2">
    <location>
        <position position="201"/>
    </location>
    <ligand>
        <name>a ubiquinone</name>
        <dbReference type="ChEBI" id="CHEBI:16389"/>
    </ligand>
</feature>
<feature type="sequence conflict" description="In Ref. 2; CAA04092." evidence="5" ref="2">
    <original>I</original>
    <variation>V</variation>
    <location>
        <position position="232"/>
    </location>
</feature>
<name>CYB_SORPA</name>
<geneLocation type="mitochondrion"/>
<keyword id="KW-0249">Electron transport</keyword>
<keyword id="KW-0349">Heme</keyword>
<keyword id="KW-0408">Iron</keyword>
<keyword id="KW-0472">Membrane</keyword>
<keyword id="KW-0479">Metal-binding</keyword>
<keyword id="KW-0496">Mitochondrion</keyword>
<keyword id="KW-0999">Mitochondrion inner membrane</keyword>
<keyword id="KW-0679">Respiratory chain</keyword>
<keyword id="KW-0812">Transmembrane</keyword>
<keyword id="KW-1133">Transmembrane helix</keyword>
<keyword id="KW-0813">Transport</keyword>
<keyword id="KW-0830">Ubiquinone</keyword>
<accession>O79460</accession>
<accession>Q959S9</accession>